<evidence type="ECO:0000269" key="1">
    <source>
    </source>
</evidence>
<evidence type="ECO:0000305" key="2"/>
<protein>
    <recommendedName>
        <fullName>Glycolipid transfer protein domain-containing protein 2</fullName>
    </recommendedName>
</protein>
<name>GLTD2_HUMAN</name>
<proteinExistence type="evidence at protein level"/>
<feature type="chain" id="PRO_0000317162" description="Glycolipid transfer protein domain-containing protein 2">
    <location>
        <begin position="1"/>
        <end position="291"/>
    </location>
</feature>
<feature type="glycosylation site" description="N-linked (GlcNAc...) asparagine" evidence="1">
    <location>
        <position position="276"/>
    </location>
</feature>
<feature type="sequence conflict" description="In Ref. 2; AAI50537." evidence="2" ref="2">
    <original>V</original>
    <variation>A</variation>
    <location>
        <position position="152"/>
    </location>
</feature>
<feature type="sequence conflict" description="In Ref. 2; AAI50537." evidence="2" ref="2">
    <original>D</original>
    <variation>E</variation>
    <location>
        <position position="209"/>
    </location>
</feature>
<feature type="sequence conflict" description="In Ref. 2; AAI50537." evidence="2" ref="2">
    <original>V</original>
    <variation>L</variation>
    <location>
        <position position="265"/>
    </location>
</feature>
<gene>
    <name type="primary">GLTPD2</name>
</gene>
<organism>
    <name type="scientific">Homo sapiens</name>
    <name type="common">Human</name>
    <dbReference type="NCBI Taxonomy" id="9606"/>
    <lineage>
        <taxon>Eukaryota</taxon>
        <taxon>Metazoa</taxon>
        <taxon>Chordata</taxon>
        <taxon>Craniata</taxon>
        <taxon>Vertebrata</taxon>
        <taxon>Euteleostomi</taxon>
        <taxon>Mammalia</taxon>
        <taxon>Eutheria</taxon>
        <taxon>Euarchontoglires</taxon>
        <taxon>Primates</taxon>
        <taxon>Haplorrhini</taxon>
        <taxon>Catarrhini</taxon>
        <taxon>Hominidae</taxon>
        <taxon>Homo</taxon>
    </lineage>
</organism>
<keyword id="KW-0325">Glycoprotein</keyword>
<keyword id="KW-1267">Proteomics identification</keyword>
<keyword id="KW-1185">Reference proteome</keyword>
<comment type="similarity">
    <text evidence="2">Belongs to the GLTP family.</text>
</comment>
<sequence>MGVAARPPALRHWFSHSIPLAIFALLLLYLSVRSLGARSGCGPRAQPCVPGETAPFQVRQESGTLEAPERKQPPCLGPRGMLGRMMRRFHASLKPEGDVGLSPYLAGWRALVEFLTPLGSVFAFATREAFTKVTDLEARVHGPDAEHYWSLVAMAAWERRAGLLEQPGAAPRDPTRSSGSRTLLLLHRALRWSQLCLHRVATGALGGPDAGVQCSDAYRAALGPHHPWLVRQTARLAFLAFPGRRRLLELACPGATEAEARAALVRAAGTLEDVYNRTQSLLAERGLLQLA</sequence>
<reference key="1">
    <citation type="journal article" date="2006" name="Nature">
        <title>DNA sequence of human chromosome 17 and analysis of rearrangement in the human lineage.</title>
        <authorList>
            <person name="Zody M.C."/>
            <person name="Garber M."/>
            <person name="Adams D.J."/>
            <person name="Sharpe T."/>
            <person name="Harrow J."/>
            <person name="Lupski J.R."/>
            <person name="Nicholson C."/>
            <person name="Searle S.M."/>
            <person name="Wilming L."/>
            <person name="Young S.K."/>
            <person name="Abouelleil A."/>
            <person name="Allen N.R."/>
            <person name="Bi W."/>
            <person name="Bloom T."/>
            <person name="Borowsky M.L."/>
            <person name="Bugalter B.E."/>
            <person name="Butler J."/>
            <person name="Chang J.L."/>
            <person name="Chen C.-K."/>
            <person name="Cook A."/>
            <person name="Corum B."/>
            <person name="Cuomo C.A."/>
            <person name="de Jong P.J."/>
            <person name="DeCaprio D."/>
            <person name="Dewar K."/>
            <person name="FitzGerald M."/>
            <person name="Gilbert J."/>
            <person name="Gibson R."/>
            <person name="Gnerre S."/>
            <person name="Goldstein S."/>
            <person name="Grafham D.V."/>
            <person name="Grocock R."/>
            <person name="Hafez N."/>
            <person name="Hagopian D.S."/>
            <person name="Hart E."/>
            <person name="Norman C.H."/>
            <person name="Humphray S."/>
            <person name="Jaffe D.B."/>
            <person name="Jones M."/>
            <person name="Kamal M."/>
            <person name="Khodiyar V.K."/>
            <person name="LaButti K."/>
            <person name="Laird G."/>
            <person name="Lehoczky J."/>
            <person name="Liu X."/>
            <person name="Lokyitsang T."/>
            <person name="Loveland J."/>
            <person name="Lui A."/>
            <person name="Macdonald P."/>
            <person name="Major J.E."/>
            <person name="Matthews L."/>
            <person name="Mauceli E."/>
            <person name="McCarroll S.A."/>
            <person name="Mihalev A.H."/>
            <person name="Mudge J."/>
            <person name="Nguyen C."/>
            <person name="Nicol R."/>
            <person name="O'Leary S.B."/>
            <person name="Osoegawa K."/>
            <person name="Schwartz D.C."/>
            <person name="Shaw-Smith C."/>
            <person name="Stankiewicz P."/>
            <person name="Steward C."/>
            <person name="Swarbreck D."/>
            <person name="Venkataraman V."/>
            <person name="Whittaker C.A."/>
            <person name="Yang X."/>
            <person name="Zimmer A.R."/>
            <person name="Bradley A."/>
            <person name="Hubbard T."/>
            <person name="Birren B.W."/>
            <person name="Rogers J."/>
            <person name="Lander E.S."/>
            <person name="Nusbaum C."/>
        </authorList>
    </citation>
    <scope>NUCLEOTIDE SEQUENCE [LARGE SCALE GENOMIC DNA]</scope>
</reference>
<reference key="2">
    <citation type="journal article" date="2004" name="Genome Res.">
        <title>The status, quality, and expansion of the NIH full-length cDNA project: the Mammalian Gene Collection (MGC).</title>
        <authorList>
            <consortium name="The MGC Project Team"/>
        </authorList>
    </citation>
    <scope>NUCLEOTIDE SEQUENCE [LARGE SCALE MRNA] OF 70-291</scope>
</reference>
<reference key="3">
    <citation type="journal article" date="2009" name="J. Proteome Res.">
        <title>Glycoproteomics analysis of human liver tissue by combination of multiple enzyme digestion and hydrazide chemistry.</title>
        <authorList>
            <person name="Chen R."/>
            <person name="Jiang X."/>
            <person name="Sun D."/>
            <person name="Han G."/>
            <person name="Wang F."/>
            <person name="Ye M."/>
            <person name="Wang L."/>
            <person name="Zou H."/>
        </authorList>
    </citation>
    <scope>GLYCOSYLATION [LARGE SCALE ANALYSIS] AT ASN-276</scope>
    <source>
        <tissue>Liver</tissue>
    </source>
</reference>
<accession>A6NH11</accession>
<accession>A7E2T2</accession>
<dbReference type="EMBL" id="AC109333">
    <property type="status" value="NOT_ANNOTATED_CDS"/>
    <property type="molecule type" value="Genomic_DNA"/>
</dbReference>
<dbReference type="EMBL" id="BC150536">
    <property type="protein sequence ID" value="AAI50537.1"/>
    <property type="molecule type" value="mRNA"/>
</dbReference>
<dbReference type="CCDS" id="CCDS32534.1"/>
<dbReference type="RefSeq" id="NP_001014985.3">
    <property type="nucleotide sequence ID" value="NM_001014985.3"/>
</dbReference>
<dbReference type="SMR" id="A6NH11"/>
<dbReference type="FunCoup" id="A6NH11">
    <property type="interactions" value="224"/>
</dbReference>
<dbReference type="IntAct" id="A6NH11">
    <property type="interactions" value="1"/>
</dbReference>
<dbReference type="STRING" id="9606.ENSP00000328070"/>
<dbReference type="GlyCosmos" id="A6NH11">
    <property type="glycosylation" value="1 site, No reported glycans"/>
</dbReference>
<dbReference type="GlyGen" id="A6NH11">
    <property type="glycosylation" value="4 sites, 2 O-linked glycans (3 sites)"/>
</dbReference>
<dbReference type="iPTMnet" id="A6NH11"/>
<dbReference type="PhosphoSitePlus" id="A6NH11"/>
<dbReference type="BioMuta" id="GLTPD2"/>
<dbReference type="jPOST" id="A6NH11"/>
<dbReference type="MassIVE" id="A6NH11"/>
<dbReference type="PaxDb" id="9606-ENSP00000328070"/>
<dbReference type="PeptideAtlas" id="A6NH11"/>
<dbReference type="ProteomicsDB" id="1173"/>
<dbReference type="Antibodypedia" id="11322">
    <property type="antibodies" value="55 antibodies from 13 providers"/>
</dbReference>
<dbReference type="Ensembl" id="ENST00000331264.8">
    <property type="protein sequence ID" value="ENSP00000328070.7"/>
    <property type="gene ID" value="ENSG00000182327.8"/>
</dbReference>
<dbReference type="GeneID" id="388323"/>
<dbReference type="MANE-Select" id="ENST00000331264.8">
    <property type="protein sequence ID" value="ENSP00000328070.7"/>
    <property type="RefSeq nucleotide sequence ID" value="NM_001014985.3"/>
    <property type="RefSeq protein sequence ID" value="NP_001014985.3"/>
</dbReference>
<dbReference type="UCSC" id="uc002fza.3">
    <property type="organism name" value="human"/>
</dbReference>
<dbReference type="AGR" id="HGNC:33756"/>
<dbReference type="GeneCards" id="GLTPD2"/>
<dbReference type="HGNC" id="HGNC:33756">
    <property type="gene designation" value="GLTPD2"/>
</dbReference>
<dbReference type="HPA" id="ENSG00000182327">
    <property type="expression patterns" value="Tissue enriched (liver)"/>
</dbReference>
<dbReference type="MIM" id="620824">
    <property type="type" value="gene"/>
</dbReference>
<dbReference type="neXtProt" id="NX_A6NH11"/>
<dbReference type="OpenTargets" id="ENSG00000182327"/>
<dbReference type="PharmGKB" id="PA162389864"/>
<dbReference type="VEuPathDB" id="HostDB:ENSG00000182327"/>
<dbReference type="eggNOG" id="KOG4189">
    <property type="taxonomic scope" value="Eukaryota"/>
</dbReference>
<dbReference type="GeneTree" id="ENSGT00940000162518"/>
<dbReference type="HOGENOM" id="CLU_079649_0_0_1"/>
<dbReference type="InParanoid" id="A6NH11"/>
<dbReference type="OMA" id="MLGRMMR"/>
<dbReference type="OrthoDB" id="116883at2759"/>
<dbReference type="PAN-GO" id="A6NH11">
    <property type="GO annotations" value="5 GO annotations based on evolutionary models"/>
</dbReference>
<dbReference type="PhylomeDB" id="A6NH11"/>
<dbReference type="TreeFam" id="TF316097"/>
<dbReference type="PathwayCommons" id="A6NH11"/>
<dbReference type="SignaLink" id="A6NH11"/>
<dbReference type="Pharos" id="A6NH11">
    <property type="development level" value="Tdark"/>
</dbReference>
<dbReference type="PRO" id="PR:A6NH11"/>
<dbReference type="Proteomes" id="UP000005640">
    <property type="component" value="Chromosome 17"/>
</dbReference>
<dbReference type="RNAct" id="A6NH11">
    <property type="molecule type" value="protein"/>
</dbReference>
<dbReference type="Bgee" id="ENSG00000182327">
    <property type="expression patterns" value="Expressed in right lobe of liver and 93 other cell types or tissues"/>
</dbReference>
<dbReference type="GO" id="GO:0005829">
    <property type="term" value="C:cytosol"/>
    <property type="evidence" value="ECO:0000318"/>
    <property type="project" value="GO_Central"/>
</dbReference>
<dbReference type="GO" id="GO:1902387">
    <property type="term" value="F:ceramide 1-phosphate binding"/>
    <property type="evidence" value="ECO:0000318"/>
    <property type="project" value="GO_Central"/>
</dbReference>
<dbReference type="GO" id="GO:1902388">
    <property type="term" value="F:ceramide 1-phosphate transfer activity"/>
    <property type="evidence" value="ECO:0000318"/>
    <property type="project" value="GO_Central"/>
</dbReference>
<dbReference type="GO" id="GO:0035627">
    <property type="term" value="P:ceramide transport"/>
    <property type="evidence" value="ECO:0000318"/>
    <property type="project" value="GO_Central"/>
</dbReference>
<dbReference type="GO" id="GO:0120009">
    <property type="term" value="P:intermembrane lipid transfer"/>
    <property type="evidence" value="ECO:0000318"/>
    <property type="project" value="GO_Central"/>
</dbReference>
<dbReference type="FunFam" id="1.10.3520.10:FF:000002">
    <property type="entry name" value="Ceramide-1-phosphate transfer protein"/>
    <property type="match status" value="1"/>
</dbReference>
<dbReference type="Gene3D" id="1.10.3520.10">
    <property type="entry name" value="Glycolipid transfer protein"/>
    <property type="match status" value="1"/>
</dbReference>
<dbReference type="InterPro" id="IPR036497">
    <property type="entry name" value="GLTP_sf"/>
</dbReference>
<dbReference type="InterPro" id="IPR014830">
    <property type="entry name" value="Glycolipid_transfer_prot_dom"/>
</dbReference>
<dbReference type="PANTHER" id="PTHR10219:SF19">
    <property type="entry name" value="GLYCOLIPID TRANSFER PROTEIN DOMAIN-CONTAINING PROTEIN 2"/>
    <property type="match status" value="1"/>
</dbReference>
<dbReference type="PANTHER" id="PTHR10219">
    <property type="entry name" value="GLYCOLIPID TRANSFER PROTEIN-RELATED"/>
    <property type="match status" value="1"/>
</dbReference>
<dbReference type="Pfam" id="PF08718">
    <property type="entry name" value="GLTP"/>
    <property type="match status" value="1"/>
</dbReference>
<dbReference type="SUPFAM" id="SSF110004">
    <property type="entry name" value="Glycolipid transfer protein, GLTP"/>
    <property type="match status" value="1"/>
</dbReference>